<reference key="1">
    <citation type="journal article" date="2008" name="DNA Res.">
        <title>Comparative genome analysis of Lactobacillus reuteri and Lactobacillus fermentum reveal a genomic island for reuterin and cobalamin production.</title>
        <authorList>
            <person name="Morita H."/>
            <person name="Toh H."/>
            <person name="Fukuda S."/>
            <person name="Horikawa H."/>
            <person name="Oshima K."/>
            <person name="Suzuki T."/>
            <person name="Murakami M."/>
            <person name="Hisamatsu S."/>
            <person name="Kato Y."/>
            <person name="Takizawa T."/>
            <person name="Fukuoka H."/>
            <person name="Yoshimura T."/>
            <person name="Itoh K."/>
            <person name="O'Sullivan D.J."/>
            <person name="McKay L.L."/>
            <person name="Ohno H."/>
            <person name="Kikuchi J."/>
            <person name="Masaoka T."/>
            <person name="Hattori M."/>
        </authorList>
    </citation>
    <scope>NUCLEOTIDE SEQUENCE [LARGE SCALE GENOMIC DNA]</scope>
    <source>
        <strain>NBRC 3956 / LMG 18251</strain>
    </source>
</reference>
<dbReference type="EC" id="6.1.1.21" evidence="1"/>
<dbReference type="EMBL" id="AP008937">
    <property type="protein sequence ID" value="BAG27168.1"/>
    <property type="molecule type" value="Genomic_DNA"/>
</dbReference>
<dbReference type="RefSeq" id="WP_003681741.1">
    <property type="nucleotide sequence ID" value="NC_010610.1"/>
</dbReference>
<dbReference type="SMR" id="B2GBY6"/>
<dbReference type="GeneID" id="83714783"/>
<dbReference type="KEGG" id="lfe:LAF_0832"/>
<dbReference type="eggNOG" id="COG0124">
    <property type="taxonomic scope" value="Bacteria"/>
</dbReference>
<dbReference type="HOGENOM" id="CLU_025113_1_1_9"/>
<dbReference type="Proteomes" id="UP000001697">
    <property type="component" value="Chromosome"/>
</dbReference>
<dbReference type="GO" id="GO:0005737">
    <property type="term" value="C:cytoplasm"/>
    <property type="evidence" value="ECO:0007669"/>
    <property type="project" value="UniProtKB-SubCell"/>
</dbReference>
<dbReference type="GO" id="GO:0005524">
    <property type="term" value="F:ATP binding"/>
    <property type="evidence" value="ECO:0007669"/>
    <property type="project" value="UniProtKB-UniRule"/>
</dbReference>
<dbReference type="GO" id="GO:0140096">
    <property type="term" value="F:catalytic activity, acting on a protein"/>
    <property type="evidence" value="ECO:0007669"/>
    <property type="project" value="UniProtKB-ARBA"/>
</dbReference>
<dbReference type="GO" id="GO:0004821">
    <property type="term" value="F:histidine-tRNA ligase activity"/>
    <property type="evidence" value="ECO:0007669"/>
    <property type="project" value="UniProtKB-UniRule"/>
</dbReference>
<dbReference type="GO" id="GO:0016740">
    <property type="term" value="F:transferase activity"/>
    <property type="evidence" value="ECO:0007669"/>
    <property type="project" value="UniProtKB-ARBA"/>
</dbReference>
<dbReference type="GO" id="GO:0006427">
    <property type="term" value="P:histidyl-tRNA aminoacylation"/>
    <property type="evidence" value="ECO:0007669"/>
    <property type="project" value="UniProtKB-UniRule"/>
</dbReference>
<dbReference type="CDD" id="cd00773">
    <property type="entry name" value="HisRS-like_core"/>
    <property type="match status" value="1"/>
</dbReference>
<dbReference type="CDD" id="cd00859">
    <property type="entry name" value="HisRS_anticodon"/>
    <property type="match status" value="1"/>
</dbReference>
<dbReference type="FunFam" id="3.30.930.10:FF:000005">
    <property type="entry name" value="Histidine--tRNA ligase"/>
    <property type="match status" value="1"/>
</dbReference>
<dbReference type="Gene3D" id="3.40.50.800">
    <property type="entry name" value="Anticodon-binding domain"/>
    <property type="match status" value="1"/>
</dbReference>
<dbReference type="Gene3D" id="3.30.930.10">
    <property type="entry name" value="Bira Bifunctional Protein, Domain 2"/>
    <property type="match status" value="1"/>
</dbReference>
<dbReference type="HAMAP" id="MF_00127">
    <property type="entry name" value="His_tRNA_synth"/>
    <property type="match status" value="1"/>
</dbReference>
<dbReference type="InterPro" id="IPR006195">
    <property type="entry name" value="aa-tRNA-synth_II"/>
</dbReference>
<dbReference type="InterPro" id="IPR045864">
    <property type="entry name" value="aa-tRNA-synth_II/BPL/LPL"/>
</dbReference>
<dbReference type="InterPro" id="IPR004154">
    <property type="entry name" value="Anticodon-bd"/>
</dbReference>
<dbReference type="InterPro" id="IPR036621">
    <property type="entry name" value="Anticodon-bd_dom_sf"/>
</dbReference>
<dbReference type="InterPro" id="IPR015807">
    <property type="entry name" value="His-tRNA-ligase"/>
</dbReference>
<dbReference type="InterPro" id="IPR041715">
    <property type="entry name" value="HisRS-like_core"/>
</dbReference>
<dbReference type="InterPro" id="IPR004516">
    <property type="entry name" value="HisRS/HisZ"/>
</dbReference>
<dbReference type="InterPro" id="IPR033656">
    <property type="entry name" value="HisRS_anticodon"/>
</dbReference>
<dbReference type="NCBIfam" id="TIGR00442">
    <property type="entry name" value="hisS"/>
    <property type="match status" value="1"/>
</dbReference>
<dbReference type="PANTHER" id="PTHR43707:SF1">
    <property type="entry name" value="HISTIDINE--TRNA LIGASE, MITOCHONDRIAL-RELATED"/>
    <property type="match status" value="1"/>
</dbReference>
<dbReference type="PANTHER" id="PTHR43707">
    <property type="entry name" value="HISTIDYL-TRNA SYNTHETASE"/>
    <property type="match status" value="1"/>
</dbReference>
<dbReference type="Pfam" id="PF03129">
    <property type="entry name" value="HGTP_anticodon"/>
    <property type="match status" value="1"/>
</dbReference>
<dbReference type="Pfam" id="PF13393">
    <property type="entry name" value="tRNA-synt_His"/>
    <property type="match status" value="1"/>
</dbReference>
<dbReference type="PIRSF" id="PIRSF001549">
    <property type="entry name" value="His-tRNA_synth"/>
    <property type="match status" value="1"/>
</dbReference>
<dbReference type="SUPFAM" id="SSF52954">
    <property type="entry name" value="Class II aaRS ABD-related"/>
    <property type="match status" value="1"/>
</dbReference>
<dbReference type="SUPFAM" id="SSF55681">
    <property type="entry name" value="Class II aaRS and biotin synthetases"/>
    <property type="match status" value="1"/>
</dbReference>
<dbReference type="PROSITE" id="PS50862">
    <property type="entry name" value="AA_TRNA_LIGASE_II"/>
    <property type="match status" value="1"/>
</dbReference>
<name>SYH_LIMF3</name>
<gene>
    <name evidence="1" type="primary">hisS</name>
    <name type="ordered locus">LAF_0832</name>
</gene>
<comment type="catalytic activity">
    <reaction evidence="1">
        <text>tRNA(His) + L-histidine + ATP = L-histidyl-tRNA(His) + AMP + diphosphate + H(+)</text>
        <dbReference type="Rhea" id="RHEA:17313"/>
        <dbReference type="Rhea" id="RHEA-COMP:9665"/>
        <dbReference type="Rhea" id="RHEA-COMP:9689"/>
        <dbReference type="ChEBI" id="CHEBI:15378"/>
        <dbReference type="ChEBI" id="CHEBI:30616"/>
        <dbReference type="ChEBI" id="CHEBI:33019"/>
        <dbReference type="ChEBI" id="CHEBI:57595"/>
        <dbReference type="ChEBI" id="CHEBI:78442"/>
        <dbReference type="ChEBI" id="CHEBI:78527"/>
        <dbReference type="ChEBI" id="CHEBI:456215"/>
        <dbReference type="EC" id="6.1.1.21"/>
    </reaction>
</comment>
<comment type="subunit">
    <text evidence="1">Homodimer.</text>
</comment>
<comment type="subcellular location">
    <subcellularLocation>
        <location evidence="1">Cytoplasm</location>
    </subcellularLocation>
</comment>
<comment type="similarity">
    <text evidence="1">Belongs to the class-II aminoacyl-tRNA synthetase family.</text>
</comment>
<sequence>MRYQRPKGTADILPGDSQTWQYVEGQARQIFKTYGYQEIRTPLFESYDIFSRSAGDTSDVVTKEMYDFKDKGDRHIALRPEGTAGVVRAFVENKLYGPEFNKPYKVYYIGPMFRYERPQSGRQREFHQIGVEAFGADNPAVDVEVITMALRFFKKLGLSDLRVAVNSLGDQESRANYRQALIDYLKPHYDELSEDSKERLEKNPLRVLDSKDERDQQFVENAPSILDYLTPAAAERFDQVKEMLDSLGIDYVVDATMVRGLDYYNHTIFEVMVKAKSLGHGYTTICGGGRYSGLVEELGGPDEPGVGFGIGLERLILLLGDEGVELPTEDGLDVYVVGIGEATNLESFRLVTAARDAGLVAERDYLNRKPKAQFKTAAKEGAKVTLTVGQREIEEGTVHFKVMATGKEVSVPLADCLADFGKVYQEHVEEG</sequence>
<proteinExistence type="inferred from homology"/>
<keyword id="KW-0030">Aminoacyl-tRNA synthetase</keyword>
<keyword id="KW-0067">ATP-binding</keyword>
<keyword id="KW-0963">Cytoplasm</keyword>
<keyword id="KW-0436">Ligase</keyword>
<keyword id="KW-0547">Nucleotide-binding</keyword>
<keyword id="KW-0648">Protein biosynthesis</keyword>
<keyword id="KW-1185">Reference proteome</keyword>
<organism>
    <name type="scientific">Limosilactobacillus fermentum (strain NBRC 3956 / LMG 18251)</name>
    <name type="common">Lactobacillus fermentum</name>
    <dbReference type="NCBI Taxonomy" id="334390"/>
    <lineage>
        <taxon>Bacteria</taxon>
        <taxon>Bacillati</taxon>
        <taxon>Bacillota</taxon>
        <taxon>Bacilli</taxon>
        <taxon>Lactobacillales</taxon>
        <taxon>Lactobacillaceae</taxon>
        <taxon>Limosilactobacillus</taxon>
    </lineage>
</organism>
<evidence type="ECO:0000255" key="1">
    <source>
        <dbReference type="HAMAP-Rule" id="MF_00127"/>
    </source>
</evidence>
<feature type="chain" id="PRO_1000095566" description="Histidine--tRNA ligase">
    <location>
        <begin position="1"/>
        <end position="431"/>
    </location>
</feature>
<protein>
    <recommendedName>
        <fullName evidence="1">Histidine--tRNA ligase</fullName>
        <ecNumber evidence="1">6.1.1.21</ecNumber>
    </recommendedName>
    <alternativeName>
        <fullName evidence="1">Histidyl-tRNA synthetase</fullName>
        <shortName evidence="1">HisRS</shortName>
    </alternativeName>
</protein>
<accession>B2GBY6</accession>